<organism>
    <name type="scientific">Geobacillus thermodenitrificans (strain NG80-2)</name>
    <dbReference type="NCBI Taxonomy" id="420246"/>
    <lineage>
        <taxon>Bacteria</taxon>
        <taxon>Bacillati</taxon>
        <taxon>Bacillota</taxon>
        <taxon>Bacilli</taxon>
        <taxon>Bacillales</taxon>
        <taxon>Anoxybacillaceae</taxon>
        <taxon>Geobacillus</taxon>
    </lineage>
</organism>
<comment type="function">
    <text evidence="1">Cell wall formation. Catalyzes the transfer of a GlcNAc subunit on undecaprenyl-pyrophosphoryl-MurNAc-pentapeptide (lipid intermediate I) to form undecaprenyl-pyrophosphoryl-MurNAc-(pentapeptide)GlcNAc (lipid intermediate II).</text>
</comment>
<comment type="catalytic activity">
    <reaction evidence="1">
        <text>di-trans,octa-cis-undecaprenyl diphospho-N-acetyl-alpha-D-muramoyl-L-alanyl-D-glutamyl-meso-2,6-diaminopimeloyl-D-alanyl-D-alanine + UDP-N-acetyl-alpha-D-glucosamine = di-trans,octa-cis-undecaprenyl diphospho-[N-acetyl-alpha-D-glucosaminyl-(1-&gt;4)]-N-acetyl-alpha-D-muramoyl-L-alanyl-D-glutamyl-meso-2,6-diaminopimeloyl-D-alanyl-D-alanine + UDP + H(+)</text>
        <dbReference type="Rhea" id="RHEA:31227"/>
        <dbReference type="ChEBI" id="CHEBI:15378"/>
        <dbReference type="ChEBI" id="CHEBI:57705"/>
        <dbReference type="ChEBI" id="CHEBI:58223"/>
        <dbReference type="ChEBI" id="CHEBI:61387"/>
        <dbReference type="ChEBI" id="CHEBI:61388"/>
        <dbReference type="EC" id="2.4.1.227"/>
    </reaction>
</comment>
<comment type="pathway">
    <text evidence="1">Cell wall biogenesis; peptidoglycan biosynthesis.</text>
</comment>
<comment type="subcellular location">
    <subcellularLocation>
        <location evidence="1">Cell membrane</location>
        <topology evidence="1">Peripheral membrane protein</topology>
        <orientation evidence="1">Cytoplasmic side</orientation>
    </subcellularLocation>
</comment>
<comment type="similarity">
    <text evidence="1">Belongs to the glycosyltransferase 28 family. MurG subfamily.</text>
</comment>
<dbReference type="EC" id="2.4.1.227" evidence="1"/>
<dbReference type="EMBL" id="CP000557">
    <property type="protein sequence ID" value="ABO65578.1"/>
    <property type="molecule type" value="Genomic_DNA"/>
</dbReference>
<dbReference type="RefSeq" id="WP_008881486.1">
    <property type="nucleotide sequence ID" value="NC_009328.1"/>
</dbReference>
<dbReference type="SMR" id="A4IJS4"/>
<dbReference type="CAZy" id="GT28">
    <property type="family name" value="Glycosyltransferase Family 28"/>
</dbReference>
<dbReference type="GeneID" id="87622217"/>
<dbReference type="KEGG" id="gtn:GTNG_0194"/>
<dbReference type="eggNOG" id="COG0707">
    <property type="taxonomic scope" value="Bacteria"/>
</dbReference>
<dbReference type="HOGENOM" id="CLU_037404_0_0_9"/>
<dbReference type="UniPathway" id="UPA00219"/>
<dbReference type="Proteomes" id="UP000001578">
    <property type="component" value="Chromosome"/>
</dbReference>
<dbReference type="GO" id="GO:0005886">
    <property type="term" value="C:plasma membrane"/>
    <property type="evidence" value="ECO:0007669"/>
    <property type="project" value="UniProtKB-SubCell"/>
</dbReference>
<dbReference type="GO" id="GO:0051991">
    <property type="term" value="F:UDP-N-acetyl-D-glucosamine:N-acetylmuramoyl-L-alanyl-D-glutamyl-meso-2,6-diaminopimelyl-D-alanyl-D-alanine-diphosphoundecaprenol 4-beta-N-acetylglucosaminlytransferase activity"/>
    <property type="evidence" value="ECO:0007669"/>
    <property type="project" value="RHEA"/>
</dbReference>
<dbReference type="GO" id="GO:0050511">
    <property type="term" value="F:undecaprenyldiphospho-muramoylpentapeptide beta-N-acetylglucosaminyltransferase activity"/>
    <property type="evidence" value="ECO:0007669"/>
    <property type="project" value="UniProtKB-UniRule"/>
</dbReference>
<dbReference type="GO" id="GO:0005975">
    <property type="term" value="P:carbohydrate metabolic process"/>
    <property type="evidence" value="ECO:0007669"/>
    <property type="project" value="InterPro"/>
</dbReference>
<dbReference type="GO" id="GO:0051301">
    <property type="term" value="P:cell division"/>
    <property type="evidence" value="ECO:0007669"/>
    <property type="project" value="UniProtKB-KW"/>
</dbReference>
<dbReference type="GO" id="GO:0071555">
    <property type="term" value="P:cell wall organization"/>
    <property type="evidence" value="ECO:0007669"/>
    <property type="project" value="UniProtKB-KW"/>
</dbReference>
<dbReference type="GO" id="GO:0030259">
    <property type="term" value="P:lipid glycosylation"/>
    <property type="evidence" value="ECO:0007669"/>
    <property type="project" value="UniProtKB-UniRule"/>
</dbReference>
<dbReference type="GO" id="GO:0009252">
    <property type="term" value="P:peptidoglycan biosynthetic process"/>
    <property type="evidence" value="ECO:0007669"/>
    <property type="project" value="UniProtKB-UniRule"/>
</dbReference>
<dbReference type="GO" id="GO:0008360">
    <property type="term" value="P:regulation of cell shape"/>
    <property type="evidence" value="ECO:0007669"/>
    <property type="project" value="UniProtKB-KW"/>
</dbReference>
<dbReference type="CDD" id="cd03785">
    <property type="entry name" value="GT28_MurG"/>
    <property type="match status" value="1"/>
</dbReference>
<dbReference type="Gene3D" id="3.40.50.2000">
    <property type="entry name" value="Glycogen Phosphorylase B"/>
    <property type="match status" value="2"/>
</dbReference>
<dbReference type="HAMAP" id="MF_00033">
    <property type="entry name" value="MurG"/>
    <property type="match status" value="1"/>
</dbReference>
<dbReference type="InterPro" id="IPR006009">
    <property type="entry name" value="GlcNAc_MurG"/>
</dbReference>
<dbReference type="InterPro" id="IPR007235">
    <property type="entry name" value="Glyco_trans_28_C"/>
</dbReference>
<dbReference type="InterPro" id="IPR004276">
    <property type="entry name" value="GlycoTrans_28_N"/>
</dbReference>
<dbReference type="NCBIfam" id="TIGR01133">
    <property type="entry name" value="murG"/>
    <property type="match status" value="1"/>
</dbReference>
<dbReference type="NCBIfam" id="NF009102">
    <property type="entry name" value="PRK12446.1"/>
    <property type="match status" value="1"/>
</dbReference>
<dbReference type="PANTHER" id="PTHR21015:SF27">
    <property type="entry name" value="UDP-N-ACETYLGLUCOSAMINE--N-ACETYLMURAMYL-(PENTAPEPTIDE) PYROPHOSPHORYL-UNDECAPRENOL N-ACETYLGLUCOSAMINE TRANSFERASE"/>
    <property type="match status" value="1"/>
</dbReference>
<dbReference type="PANTHER" id="PTHR21015">
    <property type="entry name" value="UDP-N-ACETYLGLUCOSAMINE--N-ACETYLMURAMYL-(PENTAPEPTIDE) PYROPHOSPHORYL-UNDECAPRENOL N-ACETYLGLUCOSAMINE TRANSFERASE 1"/>
    <property type="match status" value="1"/>
</dbReference>
<dbReference type="Pfam" id="PF04101">
    <property type="entry name" value="Glyco_tran_28_C"/>
    <property type="match status" value="1"/>
</dbReference>
<dbReference type="Pfam" id="PF03033">
    <property type="entry name" value="Glyco_transf_28"/>
    <property type="match status" value="1"/>
</dbReference>
<dbReference type="SUPFAM" id="SSF53756">
    <property type="entry name" value="UDP-Glycosyltransferase/glycogen phosphorylase"/>
    <property type="match status" value="1"/>
</dbReference>
<feature type="chain" id="PRO_1000002652" description="UDP-N-acetylglucosamine--N-acetylmuramyl-(pentapeptide) pyrophosphoryl-undecaprenol N-acetylglucosamine transferase">
    <location>
        <begin position="1"/>
        <end position="356"/>
    </location>
</feature>
<feature type="binding site" evidence="1">
    <location>
        <begin position="12"/>
        <end position="14"/>
    </location>
    <ligand>
        <name>UDP-N-acetyl-alpha-D-glucosamine</name>
        <dbReference type="ChEBI" id="CHEBI:57705"/>
    </ligand>
</feature>
<feature type="binding site" evidence="1">
    <location>
        <position position="166"/>
    </location>
    <ligand>
        <name>UDP-N-acetyl-alpha-D-glucosamine</name>
        <dbReference type="ChEBI" id="CHEBI:57705"/>
    </ligand>
</feature>
<feature type="binding site" evidence="1">
    <location>
        <position position="196"/>
    </location>
    <ligand>
        <name>UDP-N-acetyl-alpha-D-glucosamine</name>
        <dbReference type="ChEBI" id="CHEBI:57705"/>
    </ligand>
</feature>
<feature type="binding site" evidence="1">
    <location>
        <position position="291"/>
    </location>
    <ligand>
        <name>UDP-N-acetyl-alpha-D-glucosamine</name>
        <dbReference type="ChEBI" id="CHEBI:57705"/>
    </ligand>
</feature>
<name>MURG_GEOTN</name>
<protein>
    <recommendedName>
        <fullName evidence="1">UDP-N-acetylglucosamine--N-acetylmuramyl-(pentapeptide) pyrophosphoryl-undecaprenol N-acetylglucosamine transferase</fullName>
        <ecNumber evidence="1">2.4.1.227</ecNumber>
    </recommendedName>
    <alternativeName>
        <fullName evidence="1">Undecaprenyl-PP-MurNAc-pentapeptide-UDPGlcNAc GlcNAc transferase</fullName>
    </alternativeName>
</protein>
<evidence type="ECO:0000255" key="1">
    <source>
        <dbReference type="HAMAP-Rule" id="MF_00033"/>
    </source>
</evidence>
<proteinExistence type="inferred from homology"/>
<reference key="1">
    <citation type="journal article" date="2007" name="Proc. Natl. Acad. Sci. U.S.A.">
        <title>Genome and proteome of long-chain alkane degrading Geobacillus thermodenitrificans NG80-2 isolated from a deep-subsurface oil reservoir.</title>
        <authorList>
            <person name="Feng L."/>
            <person name="Wang W."/>
            <person name="Cheng J."/>
            <person name="Ren Y."/>
            <person name="Zhao G."/>
            <person name="Gao C."/>
            <person name="Tang Y."/>
            <person name="Liu X."/>
            <person name="Han W."/>
            <person name="Peng X."/>
            <person name="Liu R."/>
            <person name="Wang L."/>
        </authorList>
    </citation>
    <scope>NUCLEOTIDE SEQUENCE [LARGE SCALE GENOMIC DNA]</scope>
    <source>
        <strain>NG80-2</strain>
    </source>
</reference>
<keyword id="KW-0131">Cell cycle</keyword>
<keyword id="KW-0132">Cell division</keyword>
<keyword id="KW-1003">Cell membrane</keyword>
<keyword id="KW-0133">Cell shape</keyword>
<keyword id="KW-0961">Cell wall biogenesis/degradation</keyword>
<keyword id="KW-0328">Glycosyltransferase</keyword>
<keyword id="KW-0472">Membrane</keyword>
<keyword id="KW-0573">Peptidoglycan synthesis</keyword>
<keyword id="KW-0808">Transferase</keyword>
<sequence length="356" mass="39277">MRKKIVLTGGGTAGHVMVNVALIPKLKEQGWDIVYIGSHEGIEREIIGRIDGVPYYSVSTGKLRRYFDWKNFKDPFNVLKGVWQAYRLIQKEKPDIVFSKGGFVSVPVILGAWLNGVPSVIHESDLTPGLANKIAMPFATKICLTFPETKQHVNTDKAVYVGAVVREELKHGSAEQGRKLCQFDGQKPVLLAMGGSLGSKKINDALRASLPVLLSEFDIVHICGKGNVDTSLVGQKGYKQFEYVNEELPDLLALSDIVVSRAGANAIFELLALRKPMLLIPLSKAASRGDQILNARSFEKAGYAEVLMEEEVTNESLPAAIHRLYENKDRYKKNMEKSGSSDPLQTLLALIQNTAR</sequence>
<accession>A4IJS4</accession>
<gene>
    <name evidence="1" type="primary">murG</name>
    <name type="ordered locus">GTNG_0194</name>
</gene>